<keyword id="KW-0963">Cytoplasm</keyword>
<keyword id="KW-0238">DNA-binding</keyword>
<keyword id="KW-0255">Endonuclease</keyword>
<keyword id="KW-0378">Hydrolase</keyword>
<keyword id="KW-0540">Nuclease</keyword>
<keyword id="KW-1185">Reference proteome</keyword>
<feature type="chain" id="PRO_0000155681" description="Endonuclease NucS">
    <location>
        <begin position="1"/>
        <end position="230"/>
    </location>
</feature>
<proteinExistence type="inferred from homology"/>
<accession>Q8FQ17</accession>
<gene>
    <name evidence="1" type="primary">nucS</name>
    <name type="ordered locus">CE1318</name>
</gene>
<comment type="function">
    <text evidence="1">Cleaves both 3' and 5' ssDNA extremities of branched DNA structures.</text>
</comment>
<comment type="subcellular location">
    <subcellularLocation>
        <location evidence="1">Cytoplasm</location>
    </subcellularLocation>
</comment>
<comment type="similarity">
    <text evidence="1">Belongs to the NucS endonuclease family.</text>
</comment>
<comment type="sequence caution" evidence="2">
    <conflict type="erroneous initiation">
        <sequence resource="EMBL-CDS" id="BAC18128"/>
    </conflict>
</comment>
<evidence type="ECO:0000255" key="1">
    <source>
        <dbReference type="HAMAP-Rule" id="MF_00722"/>
    </source>
</evidence>
<evidence type="ECO:0000305" key="2"/>
<dbReference type="EC" id="3.1.-.-" evidence="1"/>
<dbReference type="EMBL" id="BA000035">
    <property type="protein sequence ID" value="BAC18128.1"/>
    <property type="status" value="ALT_INIT"/>
    <property type="molecule type" value="Genomic_DNA"/>
</dbReference>
<dbReference type="RefSeq" id="WP_035109476.1">
    <property type="nucleotide sequence ID" value="NZ_GG700686.1"/>
</dbReference>
<dbReference type="SMR" id="Q8FQ17"/>
<dbReference type="STRING" id="196164.gene:10741727"/>
<dbReference type="KEGG" id="cef:CE1318"/>
<dbReference type="eggNOG" id="COG1637">
    <property type="taxonomic scope" value="Bacteria"/>
</dbReference>
<dbReference type="HOGENOM" id="CLU_069350_0_0_11"/>
<dbReference type="OrthoDB" id="3344925at2"/>
<dbReference type="Proteomes" id="UP000001409">
    <property type="component" value="Chromosome"/>
</dbReference>
<dbReference type="GO" id="GO:0005737">
    <property type="term" value="C:cytoplasm"/>
    <property type="evidence" value="ECO:0007669"/>
    <property type="project" value="UniProtKB-SubCell"/>
</dbReference>
<dbReference type="GO" id="GO:0003677">
    <property type="term" value="F:DNA binding"/>
    <property type="evidence" value="ECO:0007669"/>
    <property type="project" value="UniProtKB-KW"/>
</dbReference>
<dbReference type="GO" id="GO:0000014">
    <property type="term" value="F:single-stranded DNA endodeoxyribonuclease activity"/>
    <property type="evidence" value="ECO:0007669"/>
    <property type="project" value="UniProtKB-UniRule"/>
</dbReference>
<dbReference type="CDD" id="cd22341">
    <property type="entry name" value="NucS-like"/>
    <property type="match status" value="1"/>
</dbReference>
<dbReference type="Gene3D" id="2.70.180.20">
    <property type="match status" value="1"/>
</dbReference>
<dbReference type="Gene3D" id="3.40.1350.10">
    <property type="match status" value="1"/>
</dbReference>
<dbReference type="HAMAP" id="MF_00722">
    <property type="entry name" value="NucS"/>
    <property type="match status" value="1"/>
</dbReference>
<dbReference type="InterPro" id="IPR002793">
    <property type="entry name" value="Endonuclease_NucS"/>
</dbReference>
<dbReference type="InterPro" id="IPR048301">
    <property type="entry name" value="NucS_C"/>
</dbReference>
<dbReference type="InterPro" id="IPR048302">
    <property type="entry name" value="NucS_N"/>
</dbReference>
<dbReference type="InterPro" id="IPR049173">
    <property type="entry name" value="NucS_N_sf"/>
</dbReference>
<dbReference type="InterPro" id="IPR011335">
    <property type="entry name" value="Restrct_endonuc-II-like"/>
</dbReference>
<dbReference type="InterPro" id="IPR011856">
    <property type="entry name" value="tRNA_endonuc-like_dom_sf"/>
</dbReference>
<dbReference type="NCBIfam" id="NF002876">
    <property type="entry name" value="PRK03298.1"/>
    <property type="match status" value="1"/>
</dbReference>
<dbReference type="PANTHER" id="PTHR38814">
    <property type="entry name" value="ENDONUCLEASE NUCS"/>
    <property type="match status" value="1"/>
</dbReference>
<dbReference type="PANTHER" id="PTHR38814:SF1">
    <property type="entry name" value="ENDONUCLEASE NUCS"/>
    <property type="match status" value="1"/>
</dbReference>
<dbReference type="Pfam" id="PF01939">
    <property type="entry name" value="NucS_C"/>
    <property type="match status" value="1"/>
</dbReference>
<dbReference type="Pfam" id="PF21003">
    <property type="entry name" value="NucS_N"/>
    <property type="match status" value="1"/>
</dbReference>
<dbReference type="SUPFAM" id="SSF52980">
    <property type="entry name" value="Restriction endonuclease-like"/>
    <property type="match status" value="1"/>
</dbReference>
<sequence>MRLVIARCSVDYIGRLEAHLPMADRLLMVKADGSVSIHADDRAYKPLNWMTPPCTLTETPITDEDGEEVGVHLWVVENKKGEQLRITVEKIHSELSHDLGVDPGLVKDGVEDHLQELLAEHITTLGEGYTLVRREYPTAIGPVDILCRDADGQTVAVEIKRRGNIDGVEQLSRYLELLNRDELLKPVQGVFAAQEIKPQARTLAEDRGIRCVTLDYQTLRGIESNELTLF</sequence>
<protein>
    <recommendedName>
        <fullName evidence="1">Endonuclease NucS</fullName>
        <ecNumber evidence="1">3.1.-.-</ecNumber>
    </recommendedName>
</protein>
<organism>
    <name type="scientific">Corynebacterium efficiens (strain DSM 44549 / YS-314 / AJ 12310 / JCM 11189 / NBRC 100395)</name>
    <dbReference type="NCBI Taxonomy" id="196164"/>
    <lineage>
        <taxon>Bacteria</taxon>
        <taxon>Bacillati</taxon>
        <taxon>Actinomycetota</taxon>
        <taxon>Actinomycetes</taxon>
        <taxon>Mycobacteriales</taxon>
        <taxon>Corynebacteriaceae</taxon>
        <taxon>Corynebacterium</taxon>
    </lineage>
</organism>
<reference key="1">
    <citation type="journal article" date="2003" name="Genome Res.">
        <title>Comparative complete genome sequence analysis of the amino acid replacements responsible for the thermostability of Corynebacterium efficiens.</title>
        <authorList>
            <person name="Nishio Y."/>
            <person name="Nakamura Y."/>
            <person name="Kawarabayasi Y."/>
            <person name="Usuda Y."/>
            <person name="Kimura E."/>
            <person name="Sugimoto S."/>
            <person name="Matsui K."/>
            <person name="Yamagishi A."/>
            <person name="Kikuchi H."/>
            <person name="Ikeo K."/>
            <person name="Gojobori T."/>
        </authorList>
    </citation>
    <scope>NUCLEOTIDE SEQUENCE [LARGE SCALE GENOMIC DNA]</scope>
    <source>
        <strain>DSM 44549 / YS-314 / AJ 12310 / JCM 11189 / NBRC 100395</strain>
    </source>
</reference>
<name>NUCS_COREF</name>